<reference key="1">
    <citation type="journal article" date="2005" name="Science">
        <title>The transcriptional landscape of the mammalian genome.</title>
        <authorList>
            <person name="Carninci P."/>
            <person name="Kasukawa T."/>
            <person name="Katayama S."/>
            <person name="Gough J."/>
            <person name="Frith M.C."/>
            <person name="Maeda N."/>
            <person name="Oyama R."/>
            <person name="Ravasi T."/>
            <person name="Lenhard B."/>
            <person name="Wells C."/>
            <person name="Kodzius R."/>
            <person name="Shimokawa K."/>
            <person name="Bajic V.B."/>
            <person name="Brenner S.E."/>
            <person name="Batalov S."/>
            <person name="Forrest A.R."/>
            <person name="Zavolan M."/>
            <person name="Davis M.J."/>
            <person name="Wilming L.G."/>
            <person name="Aidinis V."/>
            <person name="Allen J.E."/>
            <person name="Ambesi-Impiombato A."/>
            <person name="Apweiler R."/>
            <person name="Aturaliya R.N."/>
            <person name="Bailey T.L."/>
            <person name="Bansal M."/>
            <person name="Baxter L."/>
            <person name="Beisel K.W."/>
            <person name="Bersano T."/>
            <person name="Bono H."/>
            <person name="Chalk A.M."/>
            <person name="Chiu K.P."/>
            <person name="Choudhary V."/>
            <person name="Christoffels A."/>
            <person name="Clutterbuck D.R."/>
            <person name="Crowe M.L."/>
            <person name="Dalla E."/>
            <person name="Dalrymple B.P."/>
            <person name="de Bono B."/>
            <person name="Della Gatta G."/>
            <person name="di Bernardo D."/>
            <person name="Down T."/>
            <person name="Engstrom P."/>
            <person name="Fagiolini M."/>
            <person name="Faulkner G."/>
            <person name="Fletcher C.F."/>
            <person name="Fukushima T."/>
            <person name="Furuno M."/>
            <person name="Futaki S."/>
            <person name="Gariboldi M."/>
            <person name="Georgii-Hemming P."/>
            <person name="Gingeras T.R."/>
            <person name="Gojobori T."/>
            <person name="Green R.E."/>
            <person name="Gustincich S."/>
            <person name="Harbers M."/>
            <person name="Hayashi Y."/>
            <person name="Hensch T.K."/>
            <person name="Hirokawa N."/>
            <person name="Hill D."/>
            <person name="Huminiecki L."/>
            <person name="Iacono M."/>
            <person name="Ikeo K."/>
            <person name="Iwama A."/>
            <person name="Ishikawa T."/>
            <person name="Jakt M."/>
            <person name="Kanapin A."/>
            <person name="Katoh M."/>
            <person name="Kawasawa Y."/>
            <person name="Kelso J."/>
            <person name="Kitamura H."/>
            <person name="Kitano H."/>
            <person name="Kollias G."/>
            <person name="Krishnan S.P."/>
            <person name="Kruger A."/>
            <person name="Kummerfeld S.K."/>
            <person name="Kurochkin I.V."/>
            <person name="Lareau L.F."/>
            <person name="Lazarevic D."/>
            <person name="Lipovich L."/>
            <person name="Liu J."/>
            <person name="Liuni S."/>
            <person name="McWilliam S."/>
            <person name="Madan Babu M."/>
            <person name="Madera M."/>
            <person name="Marchionni L."/>
            <person name="Matsuda H."/>
            <person name="Matsuzawa S."/>
            <person name="Miki H."/>
            <person name="Mignone F."/>
            <person name="Miyake S."/>
            <person name="Morris K."/>
            <person name="Mottagui-Tabar S."/>
            <person name="Mulder N."/>
            <person name="Nakano N."/>
            <person name="Nakauchi H."/>
            <person name="Ng P."/>
            <person name="Nilsson R."/>
            <person name="Nishiguchi S."/>
            <person name="Nishikawa S."/>
            <person name="Nori F."/>
            <person name="Ohara O."/>
            <person name="Okazaki Y."/>
            <person name="Orlando V."/>
            <person name="Pang K.C."/>
            <person name="Pavan W.J."/>
            <person name="Pavesi G."/>
            <person name="Pesole G."/>
            <person name="Petrovsky N."/>
            <person name="Piazza S."/>
            <person name="Reed J."/>
            <person name="Reid J.F."/>
            <person name="Ring B.Z."/>
            <person name="Ringwald M."/>
            <person name="Rost B."/>
            <person name="Ruan Y."/>
            <person name="Salzberg S.L."/>
            <person name="Sandelin A."/>
            <person name="Schneider C."/>
            <person name="Schoenbach C."/>
            <person name="Sekiguchi K."/>
            <person name="Semple C.A."/>
            <person name="Seno S."/>
            <person name="Sessa L."/>
            <person name="Sheng Y."/>
            <person name="Shibata Y."/>
            <person name="Shimada H."/>
            <person name="Shimada K."/>
            <person name="Silva D."/>
            <person name="Sinclair B."/>
            <person name="Sperling S."/>
            <person name="Stupka E."/>
            <person name="Sugiura K."/>
            <person name="Sultana R."/>
            <person name="Takenaka Y."/>
            <person name="Taki K."/>
            <person name="Tammoja K."/>
            <person name="Tan S.L."/>
            <person name="Tang S."/>
            <person name="Taylor M.S."/>
            <person name="Tegner J."/>
            <person name="Teichmann S.A."/>
            <person name="Ueda H.R."/>
            <person name="van Nimwegen E."/>
            <person name="Verardo R."/>
            <person name="Wei C.L."/>
            <person name="Yagi K."/>
            <person name="Yamanishi H."/>
            <person name="Zabarovsky E."/>
            <person name="Zhu S."/>
            <person name="Zimmer A."/>
            <person name="Hide W."/>
            <person name="Bult C."/>
            <person name="Grimmond S.M."/>
            <person name="Teasdale R.D."/>
            <person name="Liu E.T."/>
            <person name="Brusic V."/>
            <person name="Quackenbush J."/>
            <person name="Wahlestedt C."/>
            <person name="Mattick J.S."/>
            <person name="Hume D.A."/>
            <person name="Kai C."/>
            <person name="Sasaki D."/>
            <person name="Tomaru Y."/>
            <person name="Fukuda S."/>
            <person name="Kanamori-Katayama M."/>
            <person name="Suzuki M."/>
            <person name="Aoki J."/>
            <person name="Arakawa T."/>
            <person name="Iida J."/>
            <person name="Imamura K."/>
            <person name="Itoh M."/>
            <person name="Kato T."/>
            <person name="Kawaji H."/>
            <person name="Kawagashira N."/>
            <person name="Kawashima T."/>
            <person name="Kojima M."/>
            <person name="Kondo S."/>
            <person name="Konno H."/>
            <person name="Nakano K."/>
            <person name="Ninomiya N."/>
            <person name="Nishio T."/>
            <person name="Okada M."/>
            <person name="Plessy C."/>
            <person name="Shibata K."/>
            <person name="Shiraki T."/>
            <person name="Suzuki S."/>
            <person name="Tagami M."/>
            <person name="Waki K."/>
            <person name="Watahiki A."/>
            <person name="Okamura-Oho Y."/>
            <person name="Suzuki H."/>
            <person name="Kawai J."/>
            <person name="Hayashizaki Y."/>
        </authorList>
    </citation>
    <scope>NUCLEOTIDE SEQUENCE [LARGE SCALE MRNA]</scope>
    <source>
        <strain>C57BL/6J</strain>
        <tissue>Head</tissue>
    </source>
</reference>
<reference key="2">
    <citation type="journal article" date="2004" name="Genome Res.">
        <title>The status, quality, and expansion of the NIH full-length cDNA project: the Mammalian Gene Collection (MGC).</title>
        <authorList>
            <consortium name="The MGC Project Team"/>
        </authorList>
    </citation>
    <scope>NUCLEOTIDE SEQUENCE [LARGE SCALE MRNA]</scope>
    <source>
        <strain>NMRI</strain>
        <tissue>Mammary tumor</tissue>
    </source>
</reference>
<reference key="3">
    <citation type="submission" date="2002-05" db="EMBL/GenBank/DDBJ databases">
        <title>The mouse Cilp gene.</title>
        <authorList>
            <person name="Lorenzo P."/>
            <person name="Heinegaard D."/>
        </authorList>
    </citation>
    <scope>NUCLEOTIDE SEQUENCE [GENOMIC DNA] OF 1-51 AND 344-1184</scope>
    <source>
        <strain>129/SvJ</strain>
    </source>
</reference>
<reference key="4">
    <citation type="journal article" date="2011" name="J. Biol. Chem.">
        <title>Cartilage intermediate layer protein 2 (CILP-2) is expressed in articular and meniscal cartilage and down-regulated in experimental osteoarthritis.</title>
        <authorList>
            <person name="Bernardo B.C."/>
            <person name="Belluoccio D."/>
            <person name="Rowley L."/>
            <person name="Little C.B."/>
            <person name="Hansen U."/>
            <person name="Bateman J.F."/>
        </authorList>
    </citation>
    <scope>TISSUE SPECIFICITY</scope>
    <scope>DEVELOPMENTAL STAGE</scope>
</reference>
<sequence length="1184" mass="132334">MAAIKTWVFSFLVLEVTTVLGRQTMLAQSVRRVQPVKRTPKTLAKPADSQESPGEWTTWFNIDHPGGQGDYERLDAIRFYYGERVCARPLRLEARTTDWMPAGSTGQVVHGSPREGFWCLNREQRPGQNCSNYTVRFLCPPGSLRGDAEHIWSSWSPWSKCSAACGHTGVQTRTRTCLAQTVSLCSEATEEGQLCMSQACTACDLTCPMGQVNADCDACMCQDFMLHGAISLPGGGPAPGAAVYLLAKAPKMLTRTDSSGRFRVPGLCPDGKTILKITKTKFAPIMITMPKTSLKSATINAEFVRAETPYIVMNPEMKARRAGQSVSLCCKATGKPSPDKYFWYHNNTLLDPSLYKHESKLVLRNLQQDQAGEYFCKAQSDAGAVKSKVTQLTVIAHDETPCNPTPESYLIRLPHDCFQNASNSFYYDVGRCPIKTCAGQQDNGIRCRDAVENCCGISRTEEREIQCSGYTLPTKVAVECSCQRCAETRSIVRGRVTATDNGEPMRFGHVYMGNNRVSMTGYKGTFTLHIPQDTERLVLTFVDRLQKFVNTTKVLPFNKKGSAVFHEIKMLRQKEPITLEAMETNIIPLGEVIGEDPVAELEIPSKSFYRQNGEPFTGKVKASVTFLDPRNISTATAAQSDLNFINDEGDTFPLRTYGMFSVDFRDEATSESLNAGKVKVHLDSTQVKMPEHVPAMKLWSLNPDTGLWEEEGDFKFESQRRNKREERTFLVGNMEIRERRLFNLDVPESRRCFIKVRTYRSERFLPSEQIQGVVVSVINLEPRTGFSSNPRAWGRFDSVITGPNGACLPAFCDDQSPDAYSVYVLASLSGEELEAVESSPKFNPNAIGVPQPYLNKLKYRRTDHEDPRVKKTAFQISMAKPRPNSAEESNGPIYAFENLRACEEAPPSAAHFRFYQIEGDRYDYNTVPFNEDDPMSWTEDYLAWWPKPMEFRACYIKVKIVGPLEVNVRSRNMGGTHRQTVGKLYGIRDVKSTRDRDQPNVSSACLEFKCSGMLYDQDRVDRTLVKVIPQGSCHRASVNSMLHEYLVNHLPLAVNNDTSEYTMLAPLDPLGHNYGIYTVTDQDPRTAKEIALGRCFDGTSDGSSRIMKSNVGVALTFNCAERQVGRQSAFQYLQSTPARSPATGTVQGRVPAMRQQRASRGGLRRRGSMAPLRFSGVAQQPLSN</sequence>
<dbReference type="EMBL" id="AK081544">
    <property type="protein sequence ID" value="BAC38252.1"/>
    <property type="status" value="ALT_FRAME"/>
    <property type="molecule type" value="mRNA"/>
</dbReference>
<dbReference type="EMBL" id="BC080666">
    <property type="protein sequence ID" value="AAH80666.1"/>
    <property type="molecule type" value="mRNA"/>
</dbReference>
<dbReference type="EMBL" id="AY116589">
    <property type="protein sequence ID" value="AAM92571.1"/>
    <property type="molecule type" value="Genomic_DNA"/>
</dbReference>
<dbReference type="EMBL" id="AY116591">
    <property type="protein sequence ID" value="AAM92572.1"/>
    <property type="molecule type" value="Genomic_DNA"/>
</dbReference>
<dbReference type="EMBL" id="AY116590">
    <property type="protein sequence ID" value="AAM92572.1"/>
    <property type="status" value="JOINED"/>
    <property type="molecule type" value="Genomic_DNA"/>
</dbReference>
<dbReference type="RefSeq" id="NP_775561.1">
    <property type="nucleotide sequence ID" value="NM_173385.2"/>
</dbReference>
<dbReference type="SMR" id="Q66K08"/>
<dbReference type="BioGRID" id="229526">
    <property type="interactions" value="4"/>
</dbReference>
<dbReference type="FunCoup" id="Q66K08">
    <property type="interactions" value="184"/>
</dbReference>
<dbReference type="STRING" id="10090.ENSMUSP00000036631"/>
<dbReference type="GlyCosmos" id="Q66K08">
    <property type="glycosylation" value="8 sites, No reported glycans"/>
</dbReference>
<dbReference type="GlyGen" id="Q66K08">
    <property type="glycosylation" value="8 sites"/>
</dbReference>
<dbReference type="iPTMnet" id="Q66K08"/>
<dbReference type="PhosphoSitePlus" id="Q66K08"/>
<dbReference type="jPOST" id="Q66K08"/>
<dbReference type="PaxDb" id="10090-ENSMUSP00000036631"/>
<dbReference type="PeptideAtlas" id="Q66K08"/>
<dbReference type="ProteomicsDB" id="283841"/>
<dbReference type="GeneID" id="214425"/>
<dbReference type="KEGG" id="mmu:214425"/>
<dbReference type="UCSC" id="uc009qcz.1">
    <property type="organism name" value="mouse"/>
</dbReference>
<dbReference type="AGR" id="MGI:2444507"/>
<dbReference type="CTD" id="8483"/>
<dbReference type="MGI" id="MGI:2444507">
    <property type="gene designation" value="Cilp"/>
</dbReference>
<dbReference type="eggNOG" id="ENOG502QQ8H">
    <property type="taxonomic scope" value="Eukaryota"/>
</dbReference>
<dbReference type="InParanoid" id="Q66K08"/>
<dbReference type="OrthoDB" id="13098at9989"/>
<dbReference type="PhylomeDB" id="Q66K08"/>
<dbReference type="TreeFam" id="TF330132"/>
<dbReference type="Reactome" id="R-MMU-2404192">
    <property type="pathway name" value="Signaling by Type 1 Insulin-like Growth Factor 1 Receptor (IGF1R)"/>
</dbReference>
<dbReference type="BioGRID-ORCS" id="214425">
    <property type="hits" value="6 hits in 76 CRISPR screens"/>
</dbReference>
<dbReference type="PRO" id="PR:Q66K08"/>
<dbReference type="Proteomes" id="UP000000589">
    <property type="component" value="Unplaced"/>
</dbReference>
<dbReference type="RNAct" id="Q66K08">
    <property type="molecule type" value="protein"/>
</dbReference>
<dbReference type="GO" id="GO:0005576">
    <property type="term" value="C:extracellular region"/>
    <property type="evidence" value="ECO:0007669"/>
    <property type="project" value="UniProtKB-KW"/>
</dbReference>
<dbReference type="FunFam" id="2.20.100.10:FF:000096">
    <property type="entry name" value="Cartilage intermediate layer protein 1"/>
    <property type="match status" value="1"/>
</dbReference>
<dbReference type="FunFam" id="2.60.40.10:FF:001254">
    <property type="entry name" value="Cartilage intermediate layer protein 2"/>
    <property type="match status" value="1"/>
</dbReference>
<dbReference type="Gene3D" id="2.60.40.10">
    <property type="entry name" value="Immunoglobulins"/>
    <property type="match status" value="1"/>
</dbReference>
<dbReference type="Gene3D" id="2.20.100.10">
    <property type="entry name" value="Thrombospondin type-1 (TSP1) repeat"/>
    <property type="match status" value="1"/>
</dbReference>
<dbReference type="InterPro" id="IPR056257">
    <property type="entry name" value="CILP-1/2_8th"/>
</dbReference>
<dbReference type="InterPro" id="IPR056256">
    <property type="entry name" value="CILP-1/2_b-sand_dom2"/>
</dbReference>
<dbReference type="InterPro" id="IPR056258">
    <property type="entry name" value="CILP-1/2_C"/>
</dbReference>
<dbReference type="InterPro" id="IPR056255">
    <property type="entry name" value="CILP-1/2_dom"/>
</dbReference>
<dbReference type="InterPro" id="IPR039675">
    <property type="entry name" value="CILP1/CILP2"/>
</dbReference>
<dbReference type="InterPro" id="IPR007110">
    <property type="entry name" value="Ig-like_dom"/>
</dbReference>
<dbReference type="InterPro" id="IPR036179">
    <property type="entry name" value="Ig-like_dom_sf"/>
</dbReference>
<dbReference type="InterPro" id="IPR013783">
    <property type="entry name" value="Ig-like_fold"/>
</dbReference>
<dbReference type="InterPro" id="IPR003599">
    <property type="entry name" value="Ig_sub"/>
</dbReference>
<dbReference type="InterPro" id="IPR003598">
    <property type="entry name" value="Ig_sub2"/>
</dbReference>
<dbReference type="InterPro" id="IPR000884">
    <property type="entry name" value="TSP1_rpt"/>
</dbReference>
<dbReference type="InterPro" id="IPR036383">
    <property type="entry name" value="TSP1_rpt_sf"/>
</dbReference>
<dbReference type="InterPro" id="IPR025155">
    <property type="entry name" value="WxxW_domain"/>
</dbReference>
<dbReference type="PANTHER" id="PTHR15031:SF3">
    <property type="entry name" value="CARTILAGE INTERMEDIATE LAYER PROTEIN 1"/>
    <property type="match status" value="1"/>
</dbReference>
<dbReference type="PANTHER" id="PTHR15031">
    <property type="entry name" value="CARTILAGE INTERMEDIATE LAYER PROTEIN CLIP"/>
    <property type="match status" value="1"/>
</dbReference>
<dbReference type="Pfam" id="PF23591">
    <property type="entry name" value="CILP"/>
    <property type="match status" value="1"/>
</dbReference>
<dbReference type="Pfam" id="PF23708">
    <property type="entry name" value="CILP_5th"/>
    <property type="match status" value="1"/>
</dbReference>
<dbReference type="Pfam" id="PF23730">
    <property type="entry name" value="CILP_8th"/>
    <property type="match status" value="1"/>
</dbReference>
<dbReference type="Pfam" id="PF23599">
    <property type="entry name" value="CILP_C"/>
    <property type="match status" value="1"/>
</dbReference>
<dbReference type="Pfam" id="PF13927">
    <property type="entry name" value="Ig_3"/>
    <property type="match status" value="1"/>
</dbReference>
<dbReference type="Pfam" id="PF13330">
    <property type="entry name" value="Mucin2_WxxW"/>
    <property type="match status" value="1"/>
</dbReference>
<dbReference type="Pfam" id="PF00090">
    <property type="entry name" value="TSP_1"/>
    <property type="match status" value="1"/>
</dbReference>
<dbReference type="SMART" id="SM00409">
    <property type="entry name" value="IG"/>
    <property type="match status" value="1"/>
</dbReference>
<dbReference type="SMART" id="SM00408">
    <property type="entry name" value="IGc2"/>
    <property type="match status" value="1"/>
</dbReference>
<dbReference type="SMART" id="SM00209">
    <property type="entry name" value="TSP1"/>
    <property type="match status" value="1"/>
</dbReference>
<dbReference type="SUPFAM" id="SSF48726">
    <property type="entry name" value="Immunoglobulin"/>
    <property type="match status" value="1"/>
</dbReference>
<dbReference type="SUPFAM" id="SSF82895">
    <property type="entry name" value="TSP-1 type 1 repeat"/>
    <property type="match status" value="1"/>
</dbReference>
<dbReference type="PROSITE" id="PS50835">
    <property type="entry name" value="IG_LIKE"/>
    <property type="match status" value="1"/>
</dbReference>
<dbReference type="PROSITE" id="PS50092">
    <property type="entry name" value="TSP1"/>
    <property type="match status" value="1"/>
</dbReference>
<gene>
    <name type="primary">Cilp</name>
</gene>
<proteinExistence type="evidence at protein level"/>
<name>CILP1_MOUSE</name>
<protein>
    <recommendedName>
        <fullName>Cartilage intermediate layer protein 1</fullName>
        <shortName>CILP-1</shortName>
    </recommendedName>
    <component>
        <recommendedName>
            <fullName>Cartilage intermediate layer protein 1 C1</fullName>
        </recommendedName>
    </component>
    <component>
        <recommendedName>
            <fullName>Cartilage intermediate layer protein 1 C2</fullName>
        </recommendedName>
    </component>
</protein>
<feature type="signal peptide" evidence="2">
    <location>
        <begin position="1"/>
        <end position="21"/>
    </location>
</feature>
<feature type="chain" id="PRO_0000014674" description="Cartilage intermediate layer protein 1">
    <location>
        <begin position="22"/>
        <end position="1184"/>
    </location>
</feature>
<feature type="chain" id="PRO_0000014675" description="Cartilage intermediate layer protein 1 C1">
    <location>
        <begin position="22"/>
        <end position="724" status="uncertain"/>
    </location>
</feature>
<feature type="chain" id="PRO_0000014676" description="Cartilage intermediate layer protein 1 C2">
    <location>
        <begin position="725" status="uncertain"/>
        <end position="1184"/>
    </location>
</feature>
<feature type="domain" description="TSP type-1" evidence="3">
    <location>
        <begin position="150"/>
        <end position="201"/>
    </location>
</feature>
<feature type="domain" description="Ig-like C2-type">
    <location>
        <begin position="309"/>
        <end position="393"/>
    </location>
</feature>
<feature type="region of interest" description="Disordered" evidence="4">
    <location>
        <begin position="1138"/>
        <end position="1184"/>
    </location>
</feature>
<feature type="glycosylation site" description="N-linked (GlcNAc...) asparagine" evidence="2">
    <location>
        <position position="129"/>
    </location>
</feature>
<feature type="glycosylation site" description="N-linked (GlcNAc...) asparagine" evidence="2">
    <location>
        <position position="132"/>
    </location>
</feature>
<feature type="glycosylation site" description="N-linked (GlcNAc...) asparagine" evidence="1">
    <location>
        <position position="346"/>
    </location>
</feature>
<feature type="glycosylation site" description="N-linked (GlcNAc...) asparagine" evidence="2">
    <location>
        <position position="420"/>
    </location>
</feature>
<feature type="glycosylation site" description="N-linked (GlcNAc...) asparagine" evidence="2">
    <location>
        <position position="550"/>
    </location>
</feature>
<feature type="glycosylation site" description="N-linked (GlcNAc...) asparagine" evidence="2">
    <location>
        <position position="631"/>
    </location>
</feature>
<feature type="glycosylation site" description="N-linked (GlcNAc...) asparagine" evidence="2">
    <location>
        <position position="1000"/>
    </location>
</feature>
<feature type="glycosylation site" description="N-linked (GlcNAc...) asparagine" evidence="2">
    <location>
        <position position="1056"/>
    </location>
</feature>
<feature type="disulfide bond" evidence="1">
    <location>
        <begin position="161"/>
        <end position="195"/>
    </location>
</feature>
<feature type="disulfide bond" evidence="1">
    <location>
        <begin position="165"/>
        <end position="200"/>
    </location>
</feature>
<feature type="disulfide bond" evidence="1">
    <location>
        <begin position="177"/>
        <end position="185"/>
    </location>
</feature>
<feature type="disulfide bond" evidence="1">
    <location>
        <begin position="330"/>
        <end position="376"/>
    </location>
</feature>
<feature type="sequence conflict" description="In Ref. 1; BAC38252 and 3; AAM92572." evidence="6" ref="1 3">
    <original>T</original>
    <variation>A</variation>
    <location>
        <position position="499"/>
    </location>
</feature>
<feature type="sequence conflict" description="In Ref. 3; AAM92572." evidence="6" ref="3">
    <original>M</original>
    <variation>L</variation>
    <location>
        <position position="734"/>
    </location>
</feature>
<feature type="sequence conflict" description="In Ref. 3; AAM92572." evidence="6" ref="3">
    <original>Q</original>
    <variation>E</variation>
    <location>
        <position position="1155"/>
    </location>
</feature>
<organism>
    <name type="scientific">Mus musculus</name>
    <name type="common">Mouse</name>
    <dbReference type="NCBI Taxonomy" id="10090"/>
    <lineage>
        <taxon>Eukaryota</taxon>
        <taxon>Metazoa</taxon>
        <taxon>Chordata</taxon>
        <taxon>Craniata</taxon>
        <taxon>Vertebrata</taxon>
        <taxon>Euteleostomi</taxon>
        <taxon>Mammalia</taxon>
        <taxon>Eutheria</taxon>
        <taxon>Euarchontoglires</taxon>
        <taxon>Glires</taxon>
        <taxon>Rodentia</taxon>
        <taxon>Myomorpha</taxon>
        <taxon>Muroidea</taxon>
        <taxon>Muridae</taxon>
        <taxon>Murinae</taxon>
        <taxon>Mus</taxon>
        <taxon>Mus</taxon>
    </lineage>
</organism>
<evidence type="ECO:0000250" key="1"/>
<evidence type="ECO:0000255" key="2"/>
<evidence type="ECO:0000255" key="3">
    <source>
        <dbReference type="PROSITE-ProRule" id="PRU00210"/>
    </source>
</evidence>
<evidence type="ECO:0000256" key="4">
    <source>
        <dbReference type="SAM" id="MobiDB-lite"/>
    </source>
</evidence>
<evidence type="ECO:0000269" key="5">
    <source>
    </source>
</evidence>
<evidence type="ECO:0000305" key="6"/>
<accession>Q66K08</accession>
<accession>Q7TSS0</accession>
<accession>Q7TSS1</accession>
<accession>Q8BV01</accession>
<comment type="function">
    <text evidence="1">Probably plays a role in cartilage scaffolding. May act by antagonizing TGF-beta1 (TGFB1) and IGF1 functions. Has the ability to suppress IGF1-induced proliferation and sulfated proteoglycan synthesis, and inhibits ligand-induced IGF1R autophosphorylation. May inhibit TGFB1-mediated induction of cartilage matrix genes via its interaction with TGFB1. Overexpression may lead to impair chondrocyte growth and matrix repair and indirectly promote inorganic pyrophosphate (PPi) supersaturation in aging and osteoarthritis cartilage (By similarity).</text>
</comment>
<comment type="subunit">
    <text evidence="1">Monomer. Interacts with TGFB1 (By similarity).</text>
</comment>
<comment type="subcellular location">
    <subcellularLocation>
        <location evidence="1">Secreted</location>
        <location evidence="1">Extracellular space</location>
        <location evidence="1">Extracellular matrix</location>
    </subcellularLocation>
</comment>
<comment type="tissue specificity">
    <text evidence="5">Expressed in articular and meniscal cartilage (at protein level). Primarily localizes to the superficial and intermediate zones of articular cartilage (at protein level).</text>
</comment>
<comment type="developmental stage">
    <text evidence="5">Detected in articular cartilage from 8 weeks of age, but not at earlier stages (at protein level).</text>
</comment>
<comment type="PTM">
    <text evidence="1">Cleaved into 2 chains possibly by a furin-like protease upon or preceding secretion.</text>
</comment>
<comment type="sequence caution" evidence="6">
    <conflict type="frameshift">
        <sequence resource="EMBL-CDS" id="BAC38252"/>
    </conflict>
</comment>
<keyword id="KW-0165">Cleavage on pair of basic residues</keyword>
<keyword id="KW-1015">Disulfide bond</keyword>
<keyword id="KW-0272">Extracellular matrix</keyword>
<keyword id="KW-0325">Glycoprotein</keyword>
<keyword id="KW-0393">Immunoglobulin domain</keyword>
<keyword id="KW-1185">Reference proteome</keyword>
<keyword id="KW-0964">Secreted</keyword>
<keyword id="KW-0732">Signal</keyword>